<dbReference type="EMBL" id="Y08988">
    <property type="protein sequence ID" value="CAA70175.1"/>
    <property type="molecule type" value="mRNA"/>
</dbReference>
<dbReference type="EMBL" id="EU267982">
    <property type="protein sequence ID" value="ACA50504.1"/>
    <property type="molecule type" value="mRNA"/>
</dbReference>
<dbReference type="EMBL" id="AP005167">
    <property type="protein sequence ID" value="BAC83806.1"/>
    <property type="molecule type" value="Genomic_DNA"/>
</dbReference>
<dbReference type="EMBL" id="AP008213">
    <property type="protein sequence ID" value="BAF22582.1"/>
    <property type="molecule type" value="Genomic_DNA"/>
</dbReference>
<dbReference type="EMBL" id="AP014963">
    <property type="protein sequence ID" value="BAT03270.1"/>
    <property type="molecule type" value="Genomic_DNA"/>
</dbReference>
<dbReference type="EMBL" id="CM000144">
    <property type="protein sequence ID" value="EAZ41124.1"/>
    <property type="molecule type" value="Genomic_DNA"/>
</dbReference>
<dbReference type="PIR" id="T03962">
    <property type="entry name" value="T03962"/>
</dbReference>
<dbReference type="SMR" id="Q6Z4N4"/>
<dbReference type="FunCoup" id="Q6Z4N4">
    <property type="interactions" value="756"/>
</dbReference>
<dbReference type="PaxDb" id="39947-Q6Z4N4"/>
<dbReference type="EnsemblPlants" id="Os07t0684000-01">
    <property type="protein sequence ID" value="Os07t0684000-01"/>
    <property type="gene ID" value="Os07g0684000"/>
</dbReference>
<dbReference type="Gramene" id="Os07t0684000-01">
    <property type="protein sequence ID" value="Os07t0684000-01"/>
    <property type="gene ID" value="Os07g0684000"/>
</dbReference>
<dbReference type="KEGG" id="dosa:Os07g0684000"/>
<dbReference type="eggNOG" id="ENOG502QTCR">
    <property type="taxonomic scope" value="Eukaryota"/>
</dbReference>
<dbReference type="HOGENOM" id="CLU_039568_2_0_1"/>
<dbReference type="InParanoid" id="Q6Z4N4"/>
<dbReference type="OMA" id="CDGRNER"/>
<dbReference type="OrthoDB" id="7769065at2759"/>
<dbReference type="Proteomes" id="UP000000763">
    <property type="component" value="Chromosome 7"/>
</dbReference>
<dbReference type="Proteomes" id="UP000007752">
    <property type="component" value="Chromosome 7"/>
</dbReference>
<dbReference type="Proteomes" id="UP000059680">
    <property type="component" value="Chromosome 7"/>
</dbReference>
<dbReference type="GO" id="GO:0030246">
    <property type="term" value="F:carbohydrate binding"/>
    <property type="evidence" value="ECO:0007669"/>
    <property type="project" value="UniProtKB-KW"/>
</dbReference>
<dbReference type="CDD" id="cd23431">
    <property type="entry name" value="beta-trefoil_Ricin_AtEULS3-like"/>
    <property type="match status" value="1"/>
</dbReference>
<dbReference type="Gene3D" id="2.80.10.50">
    <property type="match status" value="1"/>
</dbReference>
<dbReference type="InterPro" id="IPR040249">
    <property type="entry name" value="Ricin_B-like_lectin_EULS3-like"/>
</dbReference>
<dbReference type="InterPro" id="IPR035992">
    <property type="entry name" value="Ricin_B-like_lectins"/>
</dbReference>
<dbReference type="PANTHER" id="PTHR31257">
    <property type="entry name" value="RICIN B-LIKE LECTIN EULS3"/>
    <property type="match status" value="1"/>
</dbReference>
<dbReference type="PANTHER" id="PTHR31257:SF11">
    <property type="entry name" value="RICIN B-LIKE LECTIN R40G3"/>
    <property type="match status" value="1"/>
</dbReference>
<dbReference type="SUPFAM" id="SSF50370">
    <property type="entry name" value="Ricin B-like lectins"/>
    <property type="match status" value="1"/>
</dbReference>
<proteinExistence type="evidence at transcript level"/>
<feature type="chain" id="PRO_0000438379" description="Ricin B-like lectin R40G3">
    <location>
        <begin position="1"/>
        <end position="204"/>
    </location>
</feature>
<feature type="domain" description="Ricin B-type lectin" evidence="2">
    <location>
        <begin position="54"/>
        <end position="200"/>
    </location>
</feature>
<accession>Q6Z4N4</accession>
<accession>O24213</accession>
<organism evidence="6">
    <name type="scientific">Oryza sativa subsp. japonica</name>
    <name type="common">Rice</name>
    <dbReference type="NCBI Taxonomy" id="39947"/>
    <lineage>
        <taxon>Eukaryota</taxon>
        <taxon>Viridiplantae</taxon>
        <taxon>Streptophyta</taxon>
        <taxon>Embryophyta</taxon>
        <taxon>Tracheophyta</taxon>
        <taxon>Spermatophyta</taxon>
        <taxon>Magnoliopsida</taxon>
        <taxon>Liliopsida</taxon>
        <taxon>Poales</taxon>
        <taxon>Poaceae</taxon>
        <taxon>BOP clade</taxon>
        <taxon>Oryzoideae</taxon>
        <taxon>Oryzeae</taxon>
        <taxon>Oryzinae</taxon>
        <taxon>Oryza</taxon>
        <taxon>Oryza sativa</taxon>
    </lineage>
</organism>
<evidence type="ECO:0000250" key="1">
    <source>
        <dbReference type="UniProtKB" id="Q945P1"/>
    </source>
</evidence>
<evidence type="ECO:0000255" key="2">
    <source>
        <dbReference type="PROSITE-ProRule" id="PRU00174"/>
    </source>
</evidence>
<evidence type="ECO:0000269" key="3">
    <source>
    </source>
</evidence>
<evidence type="ECO:0000303" key="4">
    <source>
    </source>
</evidence>
<evidence type="ECO:0000305" key="5"/>
<evidence type="ECO:0000312" key="6">
    <source>
        <dbReference type="EMBL" id="BAC83806.1"/>
    </source>
</evidence>
<evidence type="ECO:0000312" key="7">
    <source>
        <dbReference type="EMBL" id="BAF22582.1"/>
    </source>
</evidence>
<evidence type="ECO:0000312" key="8">
    <source>
        <dbReference type="EMBL" id="EAZ41124.1"/>
    </source>
</evidence>
<name>40G3_ORYSJ</name>
<keyword id="KW-0430">Lectin</keyword>
<keyword id="KW-1185">Reference proteome</keyword>
<gene>
    <name evidence="5" type="primary">R40G3</name>
    <name evidence="7" type="ordered locus">Os07g0684000</name>
    <name type="ordered locus">LOC_Os07g48500</name>
    <name evidence="8" type="ORF">OsJ_25617</name>
    <name evidence="6" type="ORF">OSJNBa0060O17.15</name>
</gene>
<reference key="1">
    <citation type="journal article" date="1997" name="Planta">
        <title>An abscisic-acid- and salt-stress-responsive rice cDNA from a novel plant gene family.</title>
        <authorList>
            <person name="Moons A."/>
            <person name="Gielen J."/>
            <person name="Vandekerckhove J."/>
            <person name="Van der Straeten D."/>
            <person name="Gheysen G."/>
            <person name="Van Montagu M."/>
        </authorList>
    </citation>
    <scope>NUCLEOTIDE SEQUENCE [MRNA]</scope>
    <scope>TISSUE SPECIFICITY</scope>
    <scope>INDUCTION</scope>
</reference>
<reference key="2">
    <citation type="submission" date="2007-11" db="EMBL/GenBank/DDBJ databases">
        <title>Molecular cloning of the osr40g3 gene in rice.</title>
        <authorList>
            <person name="Yoon U.H."/>
            <person name="Kim Y.H."/>
        </authorList>
    </citation>
    <scope>NUCLEOTIDE SEQUENCE [MRNA]</scope>
    <source>
        <strain>cv. Ilpoombyeo</strain>
    </source>
</reference>
<reference key="3">
    <citation type="journal article" date="2005" name="Nature">
        <title>The map-based sequence of the rice genome.</title>
        <authorList>
            <consortium name="International rice genome sequencing project (IRGSP)"/>
        </authorList>
    </citation>
    <scope>NUCLEOTIDE SEQUENCE [LARGE SCALE GENOMIC DNA]</scope>
    <source>
        <strain>cv. Nipponbare</strain>
    </source>
</reference>
<reference key="4">
    <citation type="journal article" date="2008" name="Nucleic Acids Res.">
        <title>The rice annotation project database (RAP-DB): 2008 update.</title>
        <authorList>
            <consortium name="The rice annotation project (RAP)"/>
        </authorList>
    </citation>
    <scope>GENOME REANNOTATION</scope>
    <source>
        <strain>cv. Nipponbare</strain>
    </source>
</reference>
<reference key="5">
    <citation type="journal article" date="2013" name="Rice">
        <title>Improvement of the Oryza sativa Nipponbare reference genome using next generation sequence and optical map data.</title>
        <authorList>
            <person name="Kawahara Y."/>
            <person name="de la Bastide M."/>
            <person name="Hamilton J.P."/>
            <person name="Kanamori H."/>
            <person name="McCombie W.R."/>
            <person name="Ouyang S."/>
            <person name="Schwartz D.C."/>
            <person name="Tanaka T."/>
            <person name="Wu J."/>
            <person name="Zhou S."/>
            <person name="Childs K.L."/>
            <person name="Davidson R.M."/>
            <person name="Lin H."/>
            <person name="Quesada-Ocampo L."/>
            <person name="Vaillancourt B."/>
            <person name="Sakai H."/>
            <person name="Lee S.S."/>
            <person name="Kim J."/>
            <person name="Numa H."/>
            <person name="Itoh T."/>
            <person name="Buell C.R."/>
            <person name="Matsumoto T."/>
        </authorList>
    </citation>
    <scope>GENOME REANNOTATION</scope>
    <source>
        <strain>cv. Nipponbare</strain>
    </source>
</reference>
<reference key="6">
    <citation type="journal article" date="2005" name="PLoS Biol.">
        <title>The genomes of Oryza sativa: a history of duplications.</title>
        <authorList>
            <person name="Yu J."/>
            <person name="Wang J."/>
            <person name="Lin W."/>
            <person name="Li S."/>
            <person name="Li H."/>
            <person name="Zhou J."/>
            <person name="Ni P."/>
            <person name="Dong W."/>
            <person name="Hu S."/>
            <person name="Zeng C."/>
            <person name="Zhang J."/>
            <person name="Zhang Y."/>
            <person name="Li R."/>
            <person name="Xu Z."/>
            <person name="Li S."/>
            <person name="Li X."/>
            <person name="Zheng H."/>
            <person name="Cong L."/>
            <person name="Lin L."/>
            <person name="Yin J."/>
            <person name="Geng J."/>
            <person name="Li G."/>
            <person name="Shi J."/>
            <person name="Liu J."/>
            <person name="Lv H."/>
            <person name="Li J."/>
            <person name="Wang J."/>
            <person name="Deng Y."/>
            <person name="Ran L."/>
            <person name="Shi X."/>
            <person name="Wang X."/>
            <person name="Wu Q."/>
            <person name="Li C."/>
            <person name="Ren X."/>
            <person name="Wang J."/>
            <person name="Wang X."/>
            <person name="Li D."/>
            <person name="Liu D."/>
            <person name="Zhang X."/>
            <person name="Ji Z."/>
            <person name="Zhao W."/>
            <person name="Sun Y."/>
            <person name="Zhang Z."/>
            <person name="Bao J."/>
            <person name="Han Y."/>
            <person name="Dong L."/>
            <person name="Ji J."/>
            <person name="Chen P."/>
            <person name="Wu S."/>
            <person name="Liu J."/>
            <person name="Xiao Y."/>
            <person name="Bu D."/>
            <person name="Tan J."/>
            <person name="Yang L."/>
            <person name="Ye C."/>
            <person name="Zhang J."/>
            <person name="Xu J."/>
            <person name="Zhou Y."/>
            <person name="Yu Y."/>
            <person name="Zhang B."/>
            <person name="Zhuang S."/>
            <person name="Wei H."/>
            <person name="Liu B."/>
            <person name="Lei M."/>
            <person name="Yu H."/>
            <person name="Li Y."/>
            <person name="Xu H."/>
            <person name="Wei S."/>
            <person name="He X."/>
            <person name="Fang L."/>
            <person name="Zhang Z."/>
            <person name="Zhang Y."/>
            <person name="Huang X."/>
            <person name="Su Z."/>
            <person name="Tong W."/>
            <person name="Li J."/>
            <person name="Tong Z."/>
            <person name="Li S."/>
            <person name="Ye J."/>
            <person name="Wang L."/>
            <person name="Fang L."/>
            <person name="Lei T."/>
            <person name="Chen C.-S."/>
            <person name="Chen H.-C."/>
            <person name="Xu Z."/>
            <person name="Li H."/>
            <person name="Huang H."/>
            <person name="Zhang F."/>
            <person name="Xu H."/>
            <person name="Li N."/>
            <person name="Zhao C."/>
            <person name="Li S."/>
            <person name="Dong L."/>
            <person name="Huang Y."/>
            <person name="Li L."/>
            <person name="Xi Y."/>
            <person name="Qi Q."/>
            <person name="Li W."/>
            <person name="Zhang B."/>
            <person name="Hu W."/>
            <person name="Zhang Y."/>
            <person name="Tian X."/>
            <person name="Jiao Y."/>
            <person name="Liang X."/>
            <person name="Jin J."/>
            <person name="Gao L."/>
            <person name="Zheng W."/>
            <person name="Hao B."/>
            <person name="Liu S.-M."/>
            <person name="Wang W."/>
            <person name="Yuan L."/>
            <person name="Cao M."/>
            <person name="McDermott J."/>
            <person name="Samudrala R."/>
            <person name="Wang J."/>
            <person name="Wong G.K.-S."/>
            <person name="Yang H."/>
        </authorList>
    </citation>
    <scope>NUCLEOTIDE SEQUENCE [LARGE SCALE GENOMIC DNA]</scope>
    <source>
        <strain>cv. Nipponbare</strain>
    </source>
</reference>
<protein>
    <recommendedName>
        <fullName evidence="5">Ricin B-like lectin R40G3</fullName>
    </recommendedName>
    <alternativeName>
        <fullName evidence="4">Osr40g3</fullName>
    </alternativeName>
</protein>
<sequence>MDFYGRREQYGGYGGYGGGGALATPGYAPAAPYGMSQVNIEGNGCGRTLPPQPTVKVYCRANPNYAMTARNGAVVLAPANPKDEYQHWIKDMRWSTSIKDEEGYPAFALVNKATGQAIKHSLGQSHPVRLVPYNPEVMDESVLWTESRDVGNGFRCIRMVNNIYLNFDAFHGDKYHGGVRDGTDIVLWKWCEGDNQRWKIQPYY</sequence>
<comment type="function">
    <text evidence="1">Lectin which binds carbohydrates in vitro. Interacts through its lectin domain with glycan structures containing specific motifs.</text>
</comment>
<comment type="tissue specificity">
    <text evidence="3">Expressed in shoots and lamina.</text>
</comment>
<comment type="induction">
    <text evidence="3">Induced by abscisic acid (ABA) and salt stress in shoots.</text>
</comment>
<comment type="domain">
    <text evidence="1">The ricin B-type lectin domain binds glycan structures.</text>
</comment>